<keyword id="KW-1185">Reference proteome</keyword>
<keyword id="KW-0687">Ribonucleoprotein</keyword>
<keyword id="KW-0689">Ribosomal protein</keyword>
<comment type="similarity">
    <text evidence="1">Belongs to the bacterial ribosomal protein bL35 family.</text>
</comment>
<name>RL35_STRSV</name>
<proteinExistence type="inferred from homology"/>
<sequence>MPKQKTHRASAKRFKRTGSGGLKRFRAYTSHRFHGKTKKQRRHLRKAGMVHAGDFKRIKAMLTGLK</sequence>
<organism>
    <name type="scientific">Streptococcus sanguinis (strain SK36)</name>
    <dbReference type="NCBI Taxonomy" id="388919"/>
    <lineage>
        <taxon>Bacteria</taxon>
        <taxon>Bacillati</taxon>
        <taxon>Bacillota</taxon>
        <taxon>Bacilli</taxon>
        <taxon>Lactobacillales</taxon>
        <taxon>Streptococcaceae</taxon>
        <taxon>Streptococcus</taxon>
    </lineage>
</organism>
<feature type="chain" id="PRO_1000050776" description="Large ribosomal subunit protein bL35">
    <location>
        <begin position="1"/>
        <end position="66"/>
    </location>
</feature>
<feature type="region of interest" description="Disordered" evidence="2">
    <location>
        <begin position="1"/>
        <end position="21"/>
    </location>
</feature>
<feature type="compositionally biased region" description="Basic residues" evidence="2">
    <location>
        <begin position="1"/>
        <end position="16"/>
    </location>
</feature>
<dbReference type="EMBL" id="CP000387">
    <property type="protein sequence ID" value="ABN44893.1"/>
    <property type="molecule type" value="Genomic_DNA"/>
</dbReference>
<dbReference type="RefSeq" id="WP_002895038.1">
    <property type="nucleotide sequence ID" value="NZ_CAXTYR010000001.1"/>
</dbReference>
<dbReference type="RefSeq" id="YP_001035443.1">
    <property type="nucleotide sequence ID" value="NC_009009.1"/>
</dbReference>
<dbReference type="SMR" id="A3CNY8"/>
<dbReference type="STRING" id="388919.SSA_1499"/>
<dbReference type="GeneID" id="48425874"/>
<dbReference type="KEGG" id="ssa:SSA_1499"/>
<dbReference type="PATRIC" id="fig|388919.9.peg.1423"/>
<dbReference type="eggNOG" id="COG0291">
    <property type="taxonomic scope" value="Bacteria"/>
</dbReference>
<dbReference type="HOGENOM" id="CLU_169643_3_0_9"/>
<dbReference type="OrthoDB" id="47476at2"/>
<dbReference type="Proteomes" id="UP000002148">
    <property type="component" value="Chromosome"/>
</dbReference>
<dbReference type="GO" id="GO:0022625">
    <property type="term" value="C:cytosolic large ribosomal subunit"/>
    <property type="evidence" value="ECO:0007669"/>
    <property type="project" value="TreeGrafter"/>
</dbReference>
<dbReference type="GO" id="GO:0003735">
    <property type="term" value="F:structural constituent of ribosome"/>
    <property type="evidence" value="ECO:0007669"/>
    <property type="project" value="InterPro"/>
</dbReference>
<dbReference type="GO" id="GO:0006412">
    <property type="term" value="P:translation"/>
    <property type="evidence" value="ECO:0007669"/>
    <property type="project" value="UniProtKB-UniRule"/>
</dbReference>
<dbReference type="FunFam" id="4.10.410.60:FF:000001">
    <property type="entry name" value="50S ribosomal protein L35"/>
    <property type="match status" value="1"/>
</dbReference>
<dbReference type="Gene3D" id="4.10.410.60">
    <property type="match status" value="1"/>
</dbReference>
<dbReference type="HAMAP" id="MF_00514">
    <property type="entry name" value="Ribosomal_bL35"/>
    <property type="match status" value="1"/>
</dbReference>
<dbReference type="InterPro" id="IPR001706">
    <property type="entry name" value="Ribosomal_bL35"/>
</dbReference>
<dbReference type="InterPro" id="IPR021137">
    <property type="entry name" value="Ribosomal_bL35-like"/>
</dbReference>
<dbReference type="InterPro" id="IPR018265">
    <property type="entry name" value="Ribosomal_bL35_CS"/>
</dbReference>
<dbReference type="InterPro" id="IPR037229">
    <property type="entry name" value="Ribosomal_bL35_sf"/>
</dbReference>
<dbReference type="NCBIfam" id="TIGR00001">
    <property type="entry name" value="rpmI_bact"/>
    <property type="match status" value="1"/>
</dbReference>
<dbReference type="PANTHER" id="PTHR33343">
    <property type="entry name" value="54S RIBOSOMAL PROTEIN BL35M"/>
    <property type="match status" value="1"/>
</dbReference>
<dbReference type="PANTHER" id="PTHR33343:SF1">
    <property type="entry name" value="LARGE RIBOSOMAL SUBUNIT PROTEIN BL35M"/>
    <property type="match status" value="1"/>
</dbReference>
<dbReference type="Pfam" id="PF01632">
    <property type="entry name" value="Ribosomal_L35p"/>
    <property type="match status" value="1"/>
</dbReference>
<dbReference type="PRINTS" id="PR00064">
    <property type="entry name" value="RIBOSOMALL35"/>
</dbReference>
<dbReference type="SUPFAM" id="SSF143034">
    <property type="entry name" value="L35p-like"/>
    <property type="match status" value="1"/>
</dbReference>
<dbReference type="PROSITE" id="PS00936">
    <property type="entry name" value="RIBOSOMAL_L35"/>
    <property type="match status" value="1"/>
</dbReference>
<reference key="1">
    <citation type="journal article" date="2007" name="J. Bacteriol.">
        <title>Genome of the opportunistic pathogen Streptococcus sanguinis.</title>
        <authorList>
            <person name="Xu P."/>
            <person name="Alves J.M."/>
            <person name="Kitten T."/>
            <person name="Brown A."/>
            <person name="Chen Z."/>
            <person name="Ozaki L.S."/>
            <person name="Manque P."/>
            <person name="Ge X."/>
            <person name="Serrano M.G."/>
            <person name="Puiu D."/>
            <person name="Hendricks S."/>
            <person name="Wang Y."/>
            <person name="Chaplin M.D."/>
            <person name="Akan D."/>
            <person name="Paik S."/>
            <person name="Peterson D.L."/>
            <person name="Macrina F.L."/>
            <person name="Buck G.A."/>
        </authorList>
    </citation>
    <scope>NUCLEOTIDE SEQUENCE [LARGE SCALE GENOMIC DNA]</scope>
    <source>
        <strain>SK36</strain>
    </source>
</reference>
<evidence type="ECO:0000255" key="1">
    <source>
        <dbReference type="HAMAP-Rule" id="MF_00514"/>
    </source>
</evidence>
<evidence type="ECO:0000256" key="2">
    <source>
        <dbReference type="SAM" id="MobiDB-lite"/>
    </source>
</evidence>
<evidence type="ECO:0000305" key="3"/>
<accession>A3CNY8</accession>
<protein>
    <recommendedName>
        <fullName evidence="1">Large ribosomal subunit protein bL35</fullName>
    </recommendedName>
    <alternativeName>
        <fullName evidence="3">50S ribosomal protein L35</fullName>
    </alternativeName>
</protein>
<gene>
    <name evidence="1" type="primary">rpmI</name>
    <name type="ordered locus">SSA_1499</name>
</gene>